<proteinExistence type="inferred from homology"/>
<accession>A5CPA0</accession>
<keyword id="KW-0687">Ribonucleoprotein</keyword>
<keyword id="KW-0689">Ribosomal protein</keyword>
<evidence type="ECO:0000255" key="1">
    <source>
        <dbReference type="HAMAP-Rule" id="MF_00368"/>
    </source>
</evidence>
<evidence type="ECO:0000305" key="2"/>
<gene>
    <name evidence="1" type="primary">rplL</name>
    <name type="ordered locus">CMM_0861</name>
</gene>
<feature type="chain" id="PRO_1000006987" description="Large ribosomal subunit protein bL12">
    <location>
        <begin position="1"/>
        <end position="127"/>
    </location>
</feature>
<protein>
    <recommendedName>
        <fullName evidence="1">Large ribosomal subunit protein bL12</fullName>
    </recommendedName>
    <alternativeName>
        <fullName evidence="2">50S ribosomal protein L7/L12</fullName>
    </alternativeName>
</protein>
<comment type="function">
    <text evidence="1">Forms part of the ribosomal stalk which helps the ribosome interact with GTP-bound translation factors. Is thus essential for accurate translation.</text>
</comment>
<comment type="subunit">
    <text evidence="1">Homodimer. Part of the ribosomal stalk of the 50S ribosomal subunit. Forms a multimeric L10(L12)X complex, where L10 forms an elongated spine to which 2 to 4 L12 dimers bind in a sequential fashion. Binds GTP-bound translation factors.</text>
</comment>
<comment type="similarity">
    <text evidence="1">Belongs to the bacterial ribosomal protein bL12 family.</text>
</comment>
<sequence>MAKLSNDELIEAFKELTLIELSDFVKKFEEVFEVTAAAPVAAAAAPGAAAPAEEVEEKTAFDVILEAAGDKKIQVIKEVRALTSLGLGEAKALVDGAPKAVLEGANKEAADKAKAQLEAAGATVTVK</sequence>
<dbReference type="EMBL" id="AM711867">
    <property type="protein sequence ID" value="CAN00897.1"/>
    <property type="molecule type" value="Genomic_DNA"/>
</dbReference>
<dbReference type="RefSeq" id="WP_012037546.1">
    <property type="nucleotide sequence ID" value="NC_009480.1"/>
</dbReference>
<dbReference type="SMR" id="A5CPA0"/>
<dbReference type="GeneID" id="92949904"/>
<dbReference type="KEGG" id="cmi:CMM_0861"/>
<dbReference type="eggNOG" id="COG0222">
    <property type="taxonomic scope" value="Bacteria"/>
</dbReference>
<dbReference type="HOGENOM" id="CLU_086499_3_0_11"/>
<dbReference type="OrthoDB" id="9811748at2"/>
<dbReference type="Proteomes" id="UP000001564">
    <property type="component" value="Chromosome"/>
</dbReference>
<dbReference type="GO" id="GO:0022625">
    <property type="term" value="C:cytosolic large ribosomal subunit"/>
    <property type="evidence" value="ECO:0007669"/>
    <property type="project" value="TreeGrafter"/>
</dbReference>
<dbReference type="GO" id="GO:0003729">
    <property type="term" value="F:mRNA binding"/>
    <property type="evidence" value="ECO:0007669"/>
    <property type="project" value="TreeGrafter"/>
</dbReference>
<dbReference type="GO" id="GO:0003735">
    <property type="term" value="F:structural constituent of ribosome"/>
    <property type="evidence" value="ECO:0007669"/>
    <property type="project" value="InterPro"/>
</dbReference>
<dbReference type="GO" id="GO:0006412">
    <property type="term" value="P:translation"/>
    <property type="evidence" value="ECO:0007669"/>
    <property type="project" value="UniProtKB-UniRule"/>
</dbReference>
<dbReference type="CDD" id="cd00387">
    <property type="entry name" value="Ribosomal_L7_L12"/>
    <property type="match status" value="1"/>
</dbReference>
<dbReference type="FunFam" id="3.30.1390.10:FF:000001">
    <property type="entry name" value="50S ribosomal protein L7/L12"/>
    <property type="match status" value="1"/>
</dbReference>
<dbReference type="Gene3D" id="3.30.1390.10">
    <property type="match status" value="1"/>
</dbReference>
<dbReference type="Gene3D" id="1.20.5.710">
    <property type="entry name" value="Single helix bin"/>
    <property type="match status" value="1"/>
</dbReference>
<dbReference type="HAMAP" id="MF_00368">
    <property type="entry name" value="Ribosomal_bL12"/>
    <property type="match status" value="1"/>
</dbReference>
<dbReference type="InterPro" id="IPR000206">
    <property type="entry name" value="Ribosomal_bL12"/>
</dbReference>
<dbReference type="InterPro" id="IPR013823">
    <property type="entry name" value="Ribosomal_bL12_C"/>
</dbReference>
<dbReference type="InterPro" id="IPR014719">
    <property type="entry name" value="Ribosomal_bL12_C/ClpS-like"/>
</dbReference>
<dbReference type="InterPro" id="IPR008932">
    <property type="entry name" value="Ribosomal_bL12_oligo"/>
</dbReference>
<dbReference type="InterPro" id="IPR036235">
    <property type="entry name" value="Ribosomal_bL12_oligo_N_sf"/>
</dbReference>
<dbReference type="NCBIfam" id="TIGR00855">
    <property type="entry name" value="L12"/>
    <property type="match status" value="1"/>
</dbReference>
<dbReference type="PANTHER" id="PTHR45987">
    <property type="entry name" value="39S RIBOSOMAL PROTEIN L12"/>
    <property type="match status" value="1"/>
</dbReference>
<dbReference type="PANTHER" id="PTHR45987:SF4">
    <property type="entry name" value="LARGE RIBOSOMAL SUBUNIT PROTEIN BL12M"/>
    <property type="match status" value="1"/>
</dbReference>
<dbReference type="Pfam" id="PF00542">
    <property type="entry name" value="Ribosomal_L12"/>
    <property type="match status" value="1"/>
</dbReference>
<dbReference type="Pfam" id="PF16320">
    <property type="entry name" value="Ribosomal_L12_N"/>
    <property type="match status" value="1"/>
</dbReference>
<dbReference type="SUPFAM" id="SSF54736">
    <property type="entry name" value="ClpS-like"/>
    <property type="match status" value="1"/>
</dbReference>
<dbReference type="SUPFAM" id="SSF48300">
    <property type="entry name" value="Ribosomal protein L7/12, oligomerisation (N-terminal) domain"/>
    <property type="match status" value="1"/>
</dbReference>
<organism>
    <name type="scientific">Clavibacter michiganensis subsp. michiganensis (strain NCPPB 382)</name>
    <dbReference type="NCBI Taxonomy" id="443906"/>
    <lineage>
        <taxon>Bacteria</taxon>
        <taxon>Bacillati</taxon>
        <taxon>Actinomycetota</taxon>
        <taxon>Actinomycetes</taxon>
        <taxon>Micrococcales</taxon>
        <taxon>Microbacteriaceae</taxon>
        <taxon>Clavibacter</taxon>
    </lineage>
</organism>
<reference key="1">
    <citation type="journal article" date="2008" name="J. Bacteriol.">
        <title>The genome sequence of the tomato-pathogenic actinomycete Clavibacter michiganensis subsp. michiganensis NCPPB382 reveals a large island involved in pathogenicity.</title>
        <authorList>
            <person name="Gartemann K.-H."/>
            <person name="Abt B."/>
            <person name="Bekel T."/>
            <person name="Burger A."/>
            <person name="Engemann J."/>
            <person name="Fluegel M."/>
            <person name="Gaigalat L."/>
            <person name="Goesmann A."/>
            <person name="Graefen I."/>
            <person name="Kalinowski J."/>
            <person name="Kaup O."/>
            <person name="Kirchner O."/>
            <person name="Krause L."/>
            <person name="Linke B."/>
            <person name="McHardy A."/>
            <person name="Meyer F."/>
            <person name="Pohle S."/>
            <person name="Rueckert C."/>
            <person name="Schneiker S."/>
            <person name="Zellermann E.-M."/>
            <person name="Puehler A."/>
            <person name="Eichenlaub R."/>
            <person name="Kaiser O."/>
            <person name="Bartels D."/>
        </authorList>
    </citation>
    <scope>NUCLEOTIDE SEQUENCE [LARGE SCALE GENOMIC DNA]</scope>
    <source>
        <strain>NCPPB 382</strain>
    </source>
</reference>
<name>RL7_CLAM3</name>